<proteinExistence type="evidence at protein level"/>
<name>SNX5_MOUSE</name>
<protein>
    <recommendedName>
        <fullName>Sorting nexin-5</fullName>
    </recommendedName>
</protein>
<accession>Q9D8U8</accession>
<accession>Q543N9</accession>
<dbReference type="EMBL" id="AK007676">
    <property type="protein sequence ID" value="BAB25180.1"/>
    <property type="molecule type" value="mRNA"/>
</dbReference>
<dbReference type="EMBL" id="AK029463">
    <property type="protein sequence ID" value="BAC26460.1"/>
    <property type="molecule type" value="mRNA"/>
</dbReference>
<dbReference type="EMBL" id="AK031873">
    <property type="protein sequence ID" value="BAC27587.1"/>
    <property type="molecule type" value="mRNA"/>
</dbReference>
<dbReference type="EMBL" id="AK049129">
    <property type="protein sequence ID" value="BAC33558.1"/>
    <property type="molecule type" value="mRNA"/>
</dbReference>
<dbReference type="EMBL" id="AK159904">
    <property type="protein sequence ID" value="BAE35468.1"/>
    <property type="molecule type" value="mRNA"/>
</dbReference>
<dbReference type="EMBL" id="AK169786">
    <property type="protein sequence ID" value="BAE41365.1"/>
    <property type="molecule type" value="mRNA"/>
</dbReference>
<dbReference type="EMBL" id="BC002242">
    <property type="protein sequence ID" value="AAH02242.1"/>
    <property type="molecule type" value="mRNA"/>
</dbReference>
<dbReference type="CCDS" id="CCDS16815.1"/>
<dbReference type="RefSeq" id="NP_001186117.1">
    <property type="nucleotide sequence ID" value="NM_001199188.2"/>
</dbReference>
<dbReference type="RefSeq" id="NP_077187.1">
    <property type="nucleotide sequence ID" value="NM_024225.6"/>
</dbReference>
<dbReference type="PDB" id="5TP1">
    <property type="method" value="X-ray"/>
    <property type="resolution" value="2.31 A"/>
    <property type="chains" value="A/B/C/D=20-180"/>
</dbReference>
<dbReference type="PDBsum" id="5TP1"/>
<dbReference type="SMR" id="Q9D8U8"/>
<dbReference type="BioGRID" id="213273">
    <property type="interactions" value="23"/>
</dbReference>
<dbReference type="FunCoup" id="Q9D8U8">
    <property type="interactions" value="4265"/>
</dbReference>
<dbReference type="IntAct" id="Q9D8U8">
    <property type="interactions" value="3"/>
</dbReference>
<dbReference type="MINT" id="Q9D8U8"/>
<dbReference type="STRING" id="10090.ENSMUSP00000105657"/>
<dbReference type="iPTMnet" id="Q9D8U8"/>
<dbReference type="PhosphoSitePlus" id="Q9D8U8"/>
<dbReference type="SwissPalm" id="Q9D8U8"/>
<dbReference type="jPOST" id="Q9D8U8"/>
<dbReference type="PaxDb" id="10090-ENSMUSP00000105657"/>
<dbReference type="ProteomicsDB" id="261395"/>
<dbReference type="Pumba" id="Q9D8U8"/>
<dbReference type="Antibodypedia" id="24488">
    <property type="antibodies" value="231 antibodies from 32 providers"/>
</dbReference>
<dbReference type="DNASU" id="69178"/>
<dbReference type="Ensembl" id="ENSMUST00000028909.5">
    <property type="protein sequence ID" value="ENSMUSP00000028909.5"/>
    <property type="gene ID" value="ENSMUSG00000027423.16"/>
</dbReference>
<dbReference type="Ensembl" id="ENSMUST00000110030.10">
    <property type="protein sequence ID" value="ENSMUSP00000105657.4"/>
    <property type="gene ID" value="ENSMUSG00000027423.16"/>
</dbReference>
<dbReference type="GeneID" id="69178"/>
<dbReference type="KEGG" id="mmu:69178"/>
<dbReference type="UCSC" id="uc008mqq.3">
    <property type="organism name" value="mouse"/>
</dbReference>
<dbReference type="AGR" id="MGI:1916428"/>
<dbReference type="CTD" id="27131"/>
<dbReference type="MGI" id="MGI:1916428">
    <property type="gene designation" value="Snx5"/>
</dbReference>
<dbReference type="VEuPathDB" id="HostDB:ENSMUSG00000027423"/>
<dbReference type="eggNOG" id="KOG1660">
    <property type="taxonomic scope" value="Eukaryota"/>
</dbReference>
<dbReference type="GeneTree" id="ENSGT00940000154632"/>
<dbReference type="HOGENOM" id="CLU_040966_0_0_1"/>
<dbReference type="InParanoid" id="Q9D8U8"/>
<dbReference type="OMA" id="ECCQRFE"/>
<dbReference type="OrthoDB" id="9976382at2759"/>
<dbReference type="PhylomeDB" id="Q9D8U8"/>
<dbReference type="TreeFam" id="TF313698"/>
<dbReference type="Reactome" id="R-MMU-432722">
    <property type="pathway name" value="Golgi Associated Vesicle Biogenesis"/>
</dbReference>
<dbReference type="BioGRID-ORCS" id="69178">
    <property type="hits" value="6 hits in 79 CRISPR screens"/>
</dbReference>
<dbReference type="ChiTaRS" id="Snx5">
    <property type="organism name" value="mouse"/>
</dbReference>
<dbReference type="PRO" id="PR:Q9D8U8"/>
<dbReference type="Proteomes" id="UP000000589">
    <property type="component" value="Chromosome 2"/>
</dbReference>
<dbReference type="RNAct" id="Q9D8U8">
    <property type="molecule type" value="protein"/>
</dbReference>
<dbReference type="Bgee" id="ENSMUSG00000027423">
    <property type="expression patterns" value="Expressed in stroma of bone marrow and 290 other cell types or tissues"/>
</dbReference>
<dbReference type="GO" id="GO:0005903">
    <property type="term" value="C:brush border"/>
    <property type="evidence" value="ECO:0007669"/>
    <property type="project" value="Ensembl"/>
</dbReference>
<dbReference type="GO" id="GO:0098559">
    <property type="term" value="C:cytoplasmic side of early endosome membrane"/>
    <property type="evidence" value="ECO:0000250"/>
    <property type="project" value="UniProtKB"/>
</dbReference>
<dbReference type="GO" id="GO:0009898">
    <property type="term" value="C:cytoplasmic side of plasma membrane"/>
    <property type="evidence" value="ECO:0000250"/>
    <property type="project" value="UniProtKB"/>
</dbReference>
<dbReference type="GO" id="GO:0005829">
    <property type="term" value="C:cytosol"/>
    <property type="evidence" value="ECO:0007669"/>
    <property type="project" value="Ensembl"/>
</dbReference>
<dbReference type="GO" id="GO:0070685">
    <property type="term" value="C:macropinocytic cup"/>
    <property type="evidence" value="ECO:0000250"/>
    <property type="project" value="UniProtKB"/>
</dbReference>
<dbReference type="GO" id="GO:0048471">
    <property type="term" value="C:perinuclear region of cytoplasm"/>
    <property type="evidence" value="ECO:0007669"/>
    <property type="project" value="Ensembl"/>
</dbReference>
<dbReference type="GO" id="GO:0001891">
    <property type="term" value="C:phagocytic cup"/>
    <property type="evidence" value="ECO:0007669"/>
    <property type="project" value="UniProtKB-SubCell"/>
</dbReference>
<dbReference type="GO" id="GO:0030904">
    <property type="term" value="C:retromer complex"/>
    <property type="evidence" value="ECO:0000250"/>
    <property type="project" value="UniProtKB"/>
</dbReference>
<dbReference type="GO" id="GO:0001726">
    <property type="term" value="C:ruffle"/>
    <property type="evidence" value="ECO:0007669"/>
    <property type="project" value="UniProtKB-SubCell"/>
</dbReference>
<dbReference type="GO" id="GO:0097422">
    <property type="term" value="C:tubular endosome"/>
    <property type="evidence" value="ECO:0000250"/>
    <property type="project" value="UniProtKB"/>
</dbReference>
<dbReference type="GO" id="GO:0031748">
    <property type="term" value="F:D1 dopamine receptor binding"/>
    <property type="evidence" value="ECO:0007669"/>
    <property type="project" value="Ensembl"/>
</dbReference>
<dbReference type="GO" id="GO:0034452">
    <property type="term" value="F:dynactin binding"/>
    <property type="evidence" value="ECO:0000250"/>
    <property type="project" value="UniProtKB"/>
</dbReference>
<dbReference type="GO" id="GO:0035091">
    <property type="term" value="F:phosphatidylinositol binding"/>
    <property type="evidence" value="ECO:0000250"/>
    <property type="project" value="UniProtKB"/>
</dbReference>
<dbReference type="GO" id="GO:0080025">
    <property type="term" value="F:phosphatidylinositol-3,5-bisphosphate binding"/>
    <property type="evidence" value="ECO:0007669"/>
    <property type="project" value="Ensembl"/>
</dbReference>
<dbReference type="GO" id="GO:0070273">
    <property type="term" value="F:phosphatidylinositol-4-phosphate binding"/>
    <property type="evidence" value="ECO:0007669"/>
    <property type="project" value="Ensembl"/>
</dbReference>
<dbReference type="GO" id="GO:0010314">
    <property type="term" value="F:phosphatidylinositol-5-phosphate binding"/>
    <property type="evidence" value="ECO:0007669"/>
    <property type="project" value="Ensembl"/>
</dbReference>
<dbReference type="GO" id="GO:0007174">
    <property type="term" value="P:epidermal growth factor catabolic process"/>
    <property type="evidence" value="ECO:0007669"/>
    <property type="project" value="Ensembl"/>
</dbReference>
<dbReference type="GO" id="GO:0006886">
    <property type="term" value="P:intracellular protein transport"/>
    <property type="evidence" value="ECO:0007669"/>
    <property type="project" value="InterPro"/>
</dbReference>
<dbReference type="GO" id="GO:0045776">
    <property type="term" value="P:negative regulation of blood pressure"/>
    <property type="evidence" value="ECO:0007669"/>
    <property type="project" value="Ensembl"/>
</dbReference>
<dbReference type="GO" id="GO:0006907">
    <property type="term" value="P:pinocytosis"/>
    <property type="evidence" value="ECO:0000250"/>
    <property type="project" value="UniProtKB"/>
</dbReference>
<dbReference type="GO" id="GO:0045893">
    <property type="term" value="P:positive regulation of DNA-templated transcription"/>
    <property type="evidence" value="ECO:0007669"/>
    <property type="project" value="Ensembl"/>
</dbReference>
<dbReference type="GO" id="GO:0046628">
    <property type="term" value="P:positive regulation of insulin receptor signaling pathway"/>
    <property type="evidence" value="ECO:0007669"/>
    <property type="project" value="Ensembl"/>
</dbReference>
<dbReference type="GO" id="GO:0042147">
    <property type="term" value="P:retrograde transport, endosome to Golgi"/>
    <property type="evidence" value="ECO:0007669"/>
    <property type="project" value="Ensembl"/>
</dbReference>
<dbReference type="CDD" id="cd07663">
    <property type="entry name" value="BAR_SNX5"/>
    <property type="match status" value="1"/>
</dbReference>
<dbReference type="FunFam" id="1.20.1270.60:FF:000008">
    <property type="entry name" value="Sorting nexin"/>
    <property type="match status" value="1"/>
</dbReference>
<dbReference type="FunFam" id="3.30.1520.10:FF:000001">
    <property type="entry name" value="Sorting nexin"/>
    <property type="match status" value="1"/>
</dbReference>
<dbReference type="Gene3D" id="1.20.1270.60">
    <property type="entry name" value="Arfaptin homology (AH) domain/BAR domain"/>
    <property type="match status" value="1"/>
</dbReference>
<dbReference type="Gene3D" id="3.30.1520.10">
    <property type="entry name" value="Phox-like domain"/>
    <property type="match status" value="1"/>
</dbReference>
<dbReference type="InterPro" id="IPR027267">
    <property type="entry name" value="AH/BAR_dom_sf"/>
</dbReference>
<dbReference type="InterPro" id="IPR028654">
    <property type="entry name" value="BAR_SNX5"/>
</dbReference>
<dbReference type="InterPro" id="IPR001683">
    <property type="entry name" value="PX_dom"/>
</dbReference>
<dbReference type="InterPro" id="IPR036871">
    <property type="entry name" value="PX_dom_sf"/>
</dbReference>
<dbReference type="InterPro" id="IPR014637">
    <property type="entry name" value="SNX5/SNX6/SNX32"/>
</dbReference>
<dbReference type="InterPro" id="IPR015404">
    <property type="entry name" value="Vps5_C"/>
</dbReference>
<dbReference type="PANTHER" id="PTHR45850">
    <property type="entry name" value="SORTING NEXIN FAMILY MEMBER"/>
    <property type="match status" value="1"/>
</dbReference>
<dbReference type="PANTHER" id="PTHR45850:SF5">
    <property type="entry name" value="SORTING NEXIN-5"/>
    <property type="match status" value="1"/>
</dbReference>
<dbReference type="Pfam" id="PF00787">
    <property type="entry name" value="PX"/>
    <property type="match status" value="1"/>
</dbReference>
<dbReference type="Pfam" id="PF09325">
    <property type="entry name" value="Vps5"/>
    <property type="match status" value="1"/>
</dbReference>
<dbReference type="PIRSF" id="PIRSF036924">
    <property type="entry name" value="Snx5_Snx6"/>
    <property type="match status" value="1"/>
</dbReference>
<dbReference type="SUPFAM" id="SSF103657">
    <property type="entry name" value="BAR/IMD domain-like"/>
    <property type="match status" value="1"/>
</dbReference>
<dbReference type="SUPFAM" id="SSF64268">
    <property type="entry name" value="PX domain"/>
    <property type="match status" value="1"/>
</dbReference>
<dbReference type="PROSITE" id="PS50195">
    <property type="entry name" value="PX"/>
    <property type="match status" value="1"/>
</dbReference>
<organism>
    <name type="scientific">Mus musculus</name>
    <name type="common">Mouse</name>
    <dbReference type="NCBI Taxonomy" id="10090"/>
    <lineage>
        <taxon>Eukaryota</taxon>
        <taxon>Metazoa</taxon>
        <taxon>Chordata</taxon>
        <taxon>Craniata</taxon>
        <taxon>Vertebrata</taxon>
        <taxon>Euteleostomi</taxon>
        <taxon>Mammalia</taxon>
        <taxon>Eutheria</taxon>
        <taxon>Euarchontoglires</taxon>
        <taxon>Glires</taxon>
        <taxon>Rodentia</taxon>
        <taxon>Myomorpha</taxon>
        <taxon>Muroidea</taxon>
        <taxon>Muridae</taxon>
        <taxon>Murinae</taxon>
        <taxon>Mus</taxon>
        <taxon>Mus</taxon>
    </lineage>
</organism>
<sequence length="404" mass="46797">MAAVPELLEQQEEDRSKLRSVSVDLNVDPSLQIDIPDALSERDKVKFTVHTKTTLSTFQSPEFSVTRQHEDFVWLHDTLTETTDYAGLIIPPAPTKPDFDGPREKMQKLGEGEGSMTKEEFAKMKQELEAEYLAVFKKTVSTHEVFLQRLSSHPVLSKDRNFHVFLEYDQDLSVRRKNTKEMFGGFFKSVVKSADEVLFSGVKEVDDFFEQEKNFLINYYNRIKDSCAKADKMTRSHKNVADDYIHTAACLHSLALEEPTVIKKYLLKVAELFEKLRKVEGRVSSDEDLKLTELLRYYMLNIEAAKDLLYRRTKALIDYENSNKALDKARLKSKDVKLAETHQQECCQKFEQLSESAKEELINFKRKRVAAFRKNLIEMSELEIKHARNNVSLLQSCIDLFKNN</sequence>
<comment type="function">
    <text evidence="3 5">Involved in several stages of intracellular trafficking. Interacts with membranes containing phosphatidylinositol lipids. Acts in part as component of the retromer membrane-deforming SNX-BAR subcomplex. The SNX-BAR retromer mediates retrograde transport of cargo proteins from endosomes to the trans-Golgi network (TGN) and is involved in endosome-to-plasma membrane transport for cargo protein recycling. The SNX-BAR subcomplex functions to deform the donor membrane into a tubular profile called endosome-to-TGN transport carrier (ETC). Does not have in vitro vesicle-to-membrane remodeling activity. Involved in retrograde transport of lysosomal enzyme receptor IGF2R. May function as link between endosomal transport vesicles and dynactin. Plays a role in the internalization of EGFR after EGF stimulation. Involved in EGFR endosomal sorting and degradation; the function involves PIP5K1C and is retromer-independent. Together with PIP5K1C facilitates HGS interaction with ubiquitinated EGFR, which initiates EGFR sorting to intraluminal vesicles (ILVs) of the multivesicular body for subsequent lysosomal degradation. Involved in E-cadherin sorting and degradation; inhibits PIP5K1C-mediated E-cadherin degradation (By similarity). Plays a role in macropinocytosis (PubMed:18854019).</text>
</comment>
<comment type="subunit">
    <text evidence="3">Forms heterodimers with BAR domain-containing sorting nexins SNX1 and SNX2; does not homodimerize. The heterodimers are proposed to self-assemble into helical arrays on the membrane to stabilize and expand local membrane curvature underlying endosomal tubule formation. Thought to be a component of the originally described retromer complex (also called SNX-BAR retromer) which is a pentamer containing the heterotrimeric retromer cargo-selective complex (CSC), also described as vacuolar protein sorting subcomplex (VPS), and a heterodimeric membrane-deforming subcomplex formed between SNX1 or SNX2 and SNX5 or SNX6 (also called SNX-BAR subcomplex); the respective CSC and SNX-BAR subcomplexes associate with low affinity. Interacts with SNX1, SNX2, VPS26A, VPS29, VPS35, DCTN1, DOCK1, MIB1, PIP5K1C. Interacts with HGS; increased by PIP5K1C kinase activity and by PtdIns(3P) and/or PtdIns(3,4)P2 (By similarity).</text>
</comment>
<comment type="interaction">
    <interactant intactId="EBI-643385">
        <id>Q9D8U8</id>
    </interactant>
    <interactant intactId="EBI-22303778">
        <id>P0DJI4</id>
        <label>incE</label>
    </interactant>
    <organismsDiffer>true</organismsDiffer>
    <experiments>4</experiments>
</comment>
<comment type="subcellular location">
    <subcellularLocation>
        <location evidence="3">Endosome</location>
    </subcellularLocation>
    <subcellularLocation>
        <location evidence="3">Early endosome</location>
    </subcellularLocation>
    <subcellularLocation>
        <location evidence="3">Early endosome membrane</location>
        <topology>Peripheral membrane protein</topology>
        <orientation>Cytoplasmic side</orientation>
    </subcellularLocation>
    <subcellularLocation>
        <location evidence="3">Cell membrane</location>
        <topology>Peripheral membrane protein</topology>
        <orientation evidence="3">Cytoplasmic side</orientation>
    </subcellularLocation>
    <subcellularLocation>
        <location>Cytoplasmic vesicle membrane</location>
        <topology>Peripheral membrane protein</topology>
        <orientation>Cytoplasmic side</orientation>
    </subcellularLocation>
    <subcellularLocation>
        <location>Cytoplasm</location>
    </subcellularLocation>
    <subcellularLocation>
        <location>Cell projection</location>
        <location>Phagocytic cup</location>
    </subcellularLocation>
    <subcellularLocation>
        <location>Cell projection</location>
        <location>Ruffle</location>
    </subcellularLocation>
    <text evidence="3 5">Recruited to the plasma membrane after EGF stimulation, which leads to increased levels of phosphatidylinositol 3,4-bisphosphate (PdtIns(3,4)P2) (By similarity). Detected on macropinosomes (PubMed:18854019). Targeted to membrane ruffles in response to EGFR stimulation (By similarity).</text>
</comment>
<comment type="tissue specificity">
    <text evidence="5">Detected in macrophages (at protein level).</text>
</comment>
<comment type="domain">
    <text evidence="1">The PX domain mediates interaction with membranes enriched in phosphatidylinositol 3,4-bisphosphate and/or phosphatidylinositol 4,5-bisphosphate.</text>
</comment>
<comment type="domain">
    <text evidence="3">The BAR domain is able to sense membrane curvature upon dimerization. Membrane remodeling seems to implicate insertion of an amphipathic helix (AH) in the membrane (By similarity).</text>
</comment>
<comment type="similarity">
    <text evidence="6">Belongs to the sorting nexin family.</text>
</comment>
<comment type="caution">
    <text evidence="6">The selectivity for particular phosphatidylinositol lipids is under debate. According to one report (PubMed:19553671), the rat protein binds exclusively to phosphatidylinositol 4,5-bisphosphate, while the human protein has been reported (PubMed:15561769) to bind to phosphatidylinositol 3,4-bisphosphate and also to phosphatidylinositol 3-phosphate.</text>
</comment>
<gene>
    <name type="primary">Snx5</name>
</gene>
<feature type="initiator methionine" description="Removed" evidence="3">
    <location>
        <position position="1"/>
    </location>
</feature>
<feature type="chain" id="PRO_0000213845" description="Sorting nexin-5">
    <location>
        <begin position="2"/>
        <end position="404"/>
    </location>
</feature>
<feature type="domain" description="PX" evidence="4">
    <location>
        <begin position="25"/>
        <end position="172"/>
    </location>
</feature>
<feature type="domain" description="BAR">
    <location>
        <begin position="202"/>
        <end position="404"/>
    </location>
</feature>
<feature type="region of interest" description="Interaction with DOCK1" evidence="3">
    <location>
        <begin position="169"/>
        <end position="261"/>
    </location>
</feature>
<feature type="region of interest" description="Membrane-binding amphipathic helix" evidence="3">
    <location>
        <begin position="183"/>
        <end position="200"/>
    </location>
</feature>
<feature type="binding site" evidence="2">
    <location>
        <begin position="40"/>
        <end position="46"/>
    </location>
    <ligand>
        <name>a 1,2-diacyl-sn-glycero-3-phospho-(1D-myo-inositol-4,5-bisphosphate)</name>
        <dbReference type="ChEBI" id="CHEBI:58456"/>
    </ligand>
</feature>
<feature type="binding site" evidence="2">
    <location>
        <begin position="99"/>
        <end position="105"/>
    </location>
    <ligand>
        <name>a 1,2-diacyl-sn-glycero-3-phospho-(1D-myo-inositol-4,5-bisphosphate)</name>
        <dbReference type="ChEBI" id="CHEBI:58456"/>
    </ligand>
</feature>
<feature type="binding site" evidence="2">
    <location>
        <begin position="113"/>
        <end position="116"/>
    </location>
    <ligand>
        <name>a 1,2-diacyl-sn-glycero-3-phospho-(1D-myo-inositol-4,5-bisphosphate)</name>
        <dbReference type="ChEBI" id="CHEBI:58456"/>
    </ligand>
</feature>
<feature type="modified residue" description="N-acetylalanine" evidence="3">
    <location>
        <position position="2"/>
    </location>
</feature>
<feature type="modified residue" description="Phosphoserine" evidence="3">
    <location>
        <position position="193"/>
    </location>
</feature>
<feature type="modified residue" description="N6-acetyllysine" evidence="3">
    <location>
        <position position="275"/>
    </location>
</feature>
<feature type="strand" evidence="7">
    <location>
        <begin position="31"/>
        <end position="34"/>
    </location>
</feature>
<feature type="strand" evidence="7">
    <location>
        <begin position="37"/>
        <end position="41"/>
    </location>
</feature>
<feature type="strand" evidence="7">
    <location>
        <begin position="44"/>
        <end position="53"/>
    </location>
</feature>
<feature type="strand" evidence="7">
    <location>
        <begin position="61"/>
        <end position="68"/>
    </location>
</feature>
<feature type="helix" evidence="7">
    <location>
        <begin position="69"/>
        <end position="80"/>
    </location>
</feature>
<feature type="helix" evidence="7">
    <location>
        <begin position="83"/>
        <end position="85"/>
    </location>
</feature>
<feature type="helix" evidence="7">
    <location>
        <begin position="100"/>
        <end position="111"/>
    </location>
</feature>
<feature type="turn" evidence="7">
    <location>
        <begin position="112"/>
        <end position="115"/>
    </location>
</feature>
<feature type="turn" evidence="7">
    <location>
        <begin position="118"/>
        <end position="120"/>
    </location>
</feature>
<feature type="helix" evidence="7">
    <location>
        <begin position="121"/>
        <end position="151"/>
    </location>
</feature>
<feature type="helix" evidence="7">
    <location>
        <begin position="156"/>
        <end position="158"/>
    </location>
</feature>
<feature type="helix" evidence="7">
    <location>
        <begin position="160"/>
        <end position="167"/>
    </location>
</feature>
<feature type="turn" evidence="7">
    <location>
        <begin position="172"/>
        <end position="177"/>
    </location>
</feature>
<keyword id="KW-0002">3D-structure</keyword>
<keyword id="KW-0007">Acetylation</keyword>
<keyword id="KW-1003">Cell membrane</keyword>
<keyword id="KW-0966">Cell projection</keyword>
<keyword id="KW-0963">Cytoplasm</keyword>
<keyword id="KW-0968">Cytoplasmic vesicle</keyword>
<keyword id="KW-0254">Endocytosis</keyword>
<keyword id="KW-0967">Endosome</keyword>
<keyword id="KW-0446">Lipid-binding</keyword>
<keyword id="KW-0472">Membrane</keyword>
<keyword id="KW-0597">Phosphoprotein</keyword>
<keyword id="KW-0653">Protein transport</keyword>
<keyword id="KW-1185">Reference proteome</keyword>
<keyword id="KW-0813">Transport</keyword>
<evidence type="ECO:0000250" key="1"/>
<evidence type="ECO:0000250" key="2">
    <source>
        <dbReference type="UniProtKB" id="B1H267"/>
    </source>
</evidence>
<evidence type="ECO:0000250" key="3">
    <source>
        <dbReference type="UniProtKB" id="Q9Y5X3"/>
    </source>
</evidence>
<evidence type="ECO:0000255" key="4">
    <source>
        <dbReference type="PROSITE-ProRule" id="PRU00147"/>
    </source>
</evidence>
<evidence type="ECO:0000269" key="5">
    <source>
    </source>
</evidence>
<evidence type="ECO:0000305" key="6"/>
<evidence type="ECO:0007829" key="7">
    <source>
        <dbReference type="PDB" id="5TP1"/>
    </source>
</evidence>
<reference key="1">
    <citation type="journal article" date="2005" name="Science">
        <title>The transcriptional landscape of the mammalian genome.</title>
        <authorList>
            <person name="Carninci P."/>
            <person name="Kasukawa T."/>
            <person name="Katayama S."/>
            <person name="Gough J."/>
            <person name="Frith M.C."/>
            <person name="Maeda N."/>
            <person name="Oyama R."/>
            <person name="Ravasi T."/>
            <person name="Lenhard B."/>
            <person name="Wells C."/>
            <person name="Kodzius R."/>
            <person name="Shimokawa K."/>
            <person name="Bajic V.B."/>
            <person name="Brenner S.E."/>
            <person name="Batalov S."/>
            <person name="Forrest A.R."/>
            <person name="Zavolan M."/>
            <person name="Davis M.J."/>
            <person name="Wilming L.G."/>
            <person name="Aidinis V."/>
            <person name="Allen J.E."/>
            <person name="Ambesi-Impiombato A."/>
            <person name="Apweiler R."/>
            <person name="Aturaliya R.N."/>
            <person name="Bailey T.L."/>
            <person name="Bansal M."/>
            <person name="Baxter L."/>
            <person name="Beisel K.W."/>
            <person name="Bersano T."/>
            <person name="Bono H."/>
            <person name="Chalk A.M."/>
            <person name="Chiu K.P."/>
            <person name="Choudhary V."/>
            <person name="Christoffels A."/>
            <person name="Clutterbuck D.R."/>
            <person name="Crowe M.L."/>
            <person name="Dalla E."/>
            <person name="Dalrymple B.P."/>
            <person name="de Bono B."/>
            <person name="Della Gatta G."/>
            <person name="di Bernardo D."/>
            <person name="Down T."/>
            <person name="Engstrom P."/>
            <person name="Fagiolini M."/>
            <person name="Faulkner G."/>
            <person name="Fletcher C.F."/>
            <person name="Fukushima T."/>
            <person name="Furuno M."/>
            <person name="Futaki S."/>
            <person name="Gariboldi M."/>
            <person name="Georgii-Hemming P."/>
            <person name="Gingeras T.R."/>
            <person name="Gojobori T."/>
            <person name="Green R.E."/>
            <person name="Gustincich S."/>
            <person name="Harbers M."/>
            <person name="Hayashi Y."/>
            <person name="Hensch T.K."/>
            <person name="Hirokawa N."/>
            <person name="Hill D."/>
            <person name="Huminiecki L."/>
            <person name="Iacono M."/>
            <person name="Ikeo K."/>
            <person name="Iwama A."/>
            <person name="Ishikawa T."/>
            <person name="Jakt M."/>
            <person name="Kanapin A."/>
            <person name="Katoh M."/>
            <person name="Kawasawa Y."/>
            <person name="Kelso J."/>
            <person name="Kitamura H."/>
            <person name="Kitano H."/>
            <person name="Kollias G."/>
            <person name="Krishnan S.P."/>
            <person name="Kruger A."/>
            <person name="Kummerfeld S.K."/>
            <person name="Kurochkin I.V."/>
            <person name="Lareau L.F."/>
            <person name="Lazarevic D."/>
            <person name="Lipovich L."/>
            <person name="Liu J."/>
            <person name="Liuni S."/>
            <person name="McWilliam S."/>
            <person name="Madan Babu M."/>
            <person name="Madera M."/>
            <person name="Marchionni L."/>
            <person name="Matsuda H."/>
            <person name="Matsuzawa S."/>
            <person name="Miki H."/>
            <person name="Mignone F."/>
            <person name="Miyake S."/>
            <person name="Morris K."/>
            <person name="Mottagui-Tabar S."/>
            <person name="Mulder N."/>
            <person name="Nakano N."/>
            <person name="Nakauchi H."/>
            <person name="Ng P."/>
            <person name="Nilsson R."/>
            <person name="Nishiguchi S."/>
            <person name="Nishikawa S."/>
            <person name="Nori F."/>
            <person name="Ohara O."/>
            <person name="Okazaki Y."/>
            <person name="Orlando V."/>
            <person name="Pang K.C."/>
            <person name="Pavan W.J."/>
            <person name="Pavesi G."/>
            <person name="Pesole G."/>
            <person name="Petrovsky N."/>
            <person name="Piazza S."/>
            <person name="Reed J."/>
            <person name="Reid J.F."/>
            <person name="Ring B.Z."/>
            <person name="Ringwald M."/>
            <person name="Rost B."/>
            <person name="Ruan Y."/>
            <person name="Salzberg S.L."/>
            <person name="Sandelin A."/>
            <person name="Schneider C."/>
            <person name="Schoenbach C."/>
            <person name="Sekiguchi K."/>
            <person name="Semple C.A."/>
            <person name="Seno S."/>
            <person name="Sessa L."/>
            <person name="Sheng Y."/>
            <person name="Shibata Y."/>
            <person name="Shimada H."/>
            <person name="Shimada K."/>
            <person name="Silva D."/>
            <person name="Sinclair B."/>
            <person name="Sperling S."/>
            <person name="Stupka E."/>
            <person name="Sugiura K."/>
            <person name="Sultana R."/>
            <person name="Takenaka Y."/>
            <person name="Taki K."/>
            <person name="Tammoja K."/>
            <person name="Tan S.L."/>
            <person name="Tang S."/>
            <person name="Taylor M.S."/>
            <person name="Tegner J."/>
            <person name="Teichmann S.A."/>
            <person name="Ueda H.R."/>
            <person name="van Nimwegen E."/>
            <person name="Verardo R."/>
            <person name="Wei C.L."/>
            <person name="Yagi K."/>
            <person name="Yamanishi H."/>
            <person name="Zabarovsky E."/>
            <person name="Zhu S."/>
            <person name="Zimmer A."/>
            <person name="Hide W."/>
            <person name="Bult C."/>
            <person name="Grimmond S.M."/>
            <person name="Teasdale R.D."/>
            <person name="Liu E.T."/>
            <person name="Brusic V."/>
            <person name="Quackenbush J."/>
            <person name="Wahlestedt C."/>
            <person name="Mattick J.S."/>
            <person name="Hume D.A."/>
            <person name="Kai C."/>
            <person name="Sasaki D."/>
            <person name="Tomaru Y."/>
            <person name="Fukuda S."/>
            <person name="Kanamori-Katayama M."/>
            <person name="Suzuki M."/>
            <person name="Aoki J."/>
            <person name="Arakawa T."/>
            <person name="Iida J."/>
            <person name="Imamura K."/>
            <person name="Itoh M."/>
            <person name="Kato T."/>
            <person name="Kawaji H."/>
            <person name="Kawagashira N."/>
            <person name="Kawashima T."/>
            <person name="Kojima M."/>
            <person name="Kondo S."/>
            <person name="Konno H."/>
            <person name="Nakano K."/>
            <person name="Ninomiya N."/>
            <person name="Nishio T."/>
            <person name="Okada M."/>
            <person name="Plessy C."/>
            <person name="Shibata K."/>
            <person name="Shiraki T."/>
            <person name="Suzuki S."/>
            <person name="Tagami M."/>
            <person name="Waki K."/>
            <person name="Watahiki A."/>
            <person name="Okamura-Oho Y."/>
            <person name="Suzuki H."/>
            <person name="Kawai J."/>
            <person name="Hayashizaki Y."/>
        </authorList>
    </citation>
    <scope>NUCLEOTIDE SEQUENCE [LARGE SCALE MRNA]</scope>
    <source>
        <strain>C57BL/6J</strain>
        <strain>NOD</strain>
        <tissue>Head</tissue>
        <tissue>Medulla oblongata</tissue>
        <tissue>Pancreas</tissue>
        <tissue>Thymus</tissue>
    </source>
</reference>
<reference key="2">
    <citation type="journal article" date="2004" name="Genome Res.">
        <title>The status, quality, and expansion of the NIH full-length cDNA project: the Mammalian Gene Collection (MGC).</title>
        <authorList>
            <consortium name="The MGC Project Team"/>
        </authorList>
    </citation>
    <scope>NUCLEOTIDE SEQUENCE [LARGE SCALE MRNA]</scope>
</reference>
<reference key="3">
    <citation type="journal article" date="2008" name="BMC Cell Biol.">
        <title>A role for SNX5 in the regulation of macropinocytosis.</title>
        <authorList>
            <person name="Lim J.P."/>
            <person name="Wang J.T."/>
            <person name="Kerr M.C."/>
            <person name="Teasdale R.D."/>
            <person name="Gleeson P.A."/>
        </authorList>
    </citation>
    <scope>FUNCTION</scope>
    <scope>SUBCELLULAR LOCATION</scope>
    <scope>TISSUE SPECIFICITY</scope>
</reference>
<reference key="4">
    <citation type="journal article" date="2010" name="Cell">
        <title>A tissue-specific atlas of mouse protein phosphorylation and expression.</title>
        <authorList>
            <person name="Huttlin E.L."/>
            <person name="Jedrychowski M.P."/>
            <person name="Elias J.E."/>
            <person name="Goswami T."/>
            <person name="Rad R."/>
            <person name="Beausoleil S.A."/>
            <person name="Villen J."/>
            <person name="Haas W."/>
            <person name="Sowa M.E."/>
            <person name="Gygi S.P."/>
        </authorList>
    </citation>
    <scope>IDENTIFICATION BY MASS SPECTROMETRY [LARGE SCALE ANALYSIS]</scope>
    <source>
        <tissue>Brain</tissue>
        <tissue>Brown adipose tissue</tissue>
        <tissue>Heart</tissue>
        <tissue>Kidney</tissue>
        <tissue>Liver</tissue>
        <tissue>Lung</tissue>
        <tissue>Pancreas</tissue>
        <tissue>Spleen</tissue>
        <tissue>Testis</tissue>
    </source>
</reference>